<gene>
    <name evidence="1" type="primary">cobS</name>
    <name type="ordered locus">BCG_2224</name>
</gene>
<organism>
    <name type="scientific">Mycobacterium bovis (strain BCG / Pasteur 1173P2)</name>
    <dbReference type="NCBI Taxonomy" id="410289"/>
    <lineage>
        <taxon>Bacteria</taxon>
        <taxon>Bacillati</taxon>
        <taxon>Actinomycetota</taxon>
        <taxon>Actinomycetes</taxon>
        <taxon>Mycobacteriales</taxon>
        <taxon>Mycobacteriaceae</taxon>
        <taxon>Mycobacterium</taxon>
        <taxon>Mycobacterium tuberculosis complex</taxon>
    </lineage>
</organism>
<comment type="function">
    <text evidence="1">Joins adenosylcobinamide-GDP and alpha-ribazole to generate adenosylcobalamin (Ado-cobalamin). Also synthesizes adenosylcobalamin 5'-phosphate from adenosylcobinamide-GDP and alpha-ribazole 5'-phosphate.</text>
</comment>
<comment type="catalytic activity">
    <reaction evidence="1">
        <text>alpha-ribazole + adenosylcob(III)inamide-GDP = adenosylcob(III)alamin + GMP + H(+)</text>
        <dbReference type="Rhea" id="RHEA:16049"/>
        <dbReference type="ChEBI" id="CHEBI:10329"/>
        <dbReference type="ChEBI" id="CHEBI:15378"/>
        <dbReference type="ChEBI" id="CHEBI:18408"/>
        <dbReference type="ChEBI" id="CHEBI:58115"/>
        <dbReference type="ChEBI" id="CHEBI:60487"/>
        <dbReference type="EC" id="2.7.8.26"/>
    </reaction>
</comment>
<comment type="catalytic activity">
    <reaction evidence="1">
        <text>alpha-ribazole 5'-phosphate + adenosylcob(III)inamide-GDP = adenosylcob(III)alamin 5'-phosphate + GMP + H(+)</text>
        <dbReference type="Rhea" id="RHEA:23560"/>
        <dbReference type="ChEBI" id="CHEBI:15378"/>
        <dbReference type="ChEBI" id="CHEBI:57918"/>
        <dbReference type="ChEBI" id="CHEBI:58115"/>
        <dbReference type="ChEBI" id="CHEBI:60487"/>
        <dbReference type="ChEBI" id="CHEBI:60493"/>
        <dbReference type="EC" id="2.7.8.26"/>
    </reaction>
</comment>
<comment type="cofactor">
    <cofactor evidence="1">
        <name>Mg(2+)</name>
        <dbReference type="ChEBI" id="CHEBI:18420"/>
    </cofactor>
</comment>
<comment type="pathway">
    <text evidence="1">Cofactor biosynthesis; adenosylcobalamin biosynthesis; adenosylcobalamin from cob(II)yrinate a,c-diamide: step 7/7.</text>
</comment>
<comment type="subcellular location">
    <subcellularLocation>
        <location evidence="1">Cell membrane</location>
        <topology evidence="1">Multi-pass membrane protein</topology>
    </subcellularLocation>
</comment>
<comment type="similarity">
    <text evidence="1">Belongs to the CobS family.</text>
</comment>
<dbReference type="EC" id="2.7.8.26" evidence="1"/>
<dbReference type="EMBL" id="AM408590">
    <property type="protein sequence ID" value="CAL72212.1"/>
    <property type="molecule type" value="Genomic_DNA"/>
</dbReference>
<dbReference type="RefSeq" id="WP_003411433.1">
    <property type="nucleotide sequence ID" value="NC_008769.1"/>
</dbReference>
<dbReference type="KEGG" id="mbb:BCG_2224"/>
<dbReference type="HOGENOM" id="CLU_057426_0_2_11"/>
<dbReference type="UniPathway" id="UPA00148">
    <property type="reaction ID" value="UER00238"/>
</dbReference>
<dbReference type="Proteomes" id="UP000001472">
    <property type="component" value="Chromosome"/>
</dbReference>
<dbReference type="GO" id="GO:0005886">
    <property type="term" value="C:plasma membrane"/>
    <property type="evidence" value="ECO:0007669"/>
    <property type="project" value="UniProtKB-SubCell"/>
</dbReference>
<dbReference type="GO" id="GO:0051073">
    <property type="term" value="F:adenosylcobinamide-GDP ribazoletransferase activity"/>
    <property type="evidence" value="ECO:0007669"/>
    <property type="project" value="UniProtKB-UniRule"/>
</dbReference>
<dbReference type="GO" id="GO:0008818">
    <property type="term" value="F:cobalamin 5'-phosphate synthase activity"/>
    <property type="evidence" value="ECO:0007669"/>
    <property type="project" value="UniProtKB-UniRule"/>
</dbReference>
<dbReference type="GO" id="GO:0009236">
    <property type="term" value="P:cobalamin biosynthetic process"/>
    <property type="evidence" value="ECO:0007669"/>
    <property type="project" value="UniProtKB-UniRule"/>
</dbReference>
<dbReference type="HAMAP" id="MF_00719">
    <property type="entry name" value="CobS"/>
    <property type="match status" value="1"/>
</dbReference>
<dbReference type="InterPro" id="IPR003805">
    <property type="entry name" value="CobS"/>
</dbReference>
<dbReference type="NCBIfam" id="NF001279">
    <property type="entry name" value="PRK00235.2-1"/>
    <property type="match status" value="1"/>
</dbReference>
<dbReference type="PANTHER" id="PTHR34148">
    <property type="entry name" value="ADENOSYLCOBINAMIDE-GDP RIBAZOLETRANSFERASE"/>
    <property type="match status" value="1"/>
</dbReference>
<dbReference type="PANTHER" id="PTHR34148:SF1">
    <property type="entry name" value="ADENOSYLCOBINAMIDE-GDP RIBAZOLETRANSFERASE"/>
    <property type="match status" value="1"/>
</dbReference>
<dbReference type="Pfam" id="PF02654">
    <property type="entry name" value="CobS"/>
    <property type="match status" value="1"/>
</dbReference>
<feature type="chain" id="PRO_1000045777" description="Adenosylcobinamide-GDP ribazoletransferase">
    <location>
        <begin position="1"/>
        <end position="249"/>
    </location>
</feature>
<feature type="transmembrane region" description="Helical" evidence="1">
    <location>
        <begin position="32"/>
        <end position="52"/>
    </location>
</feature>
<feature type="transmembrane region" description="Helical" evidence="1">
    <location>
        <begin position="109"/>
        <end position="129"/>
    </location>
</feature>
<feature type="transmembrane region" description="Helical" evidence="1">
    <location>
        <begin position="132"/>
        <end position="152"/>
    </location>
</feature>
<feature type="transmembrane region" description="Helical" evidence="1">
    <location>
        <begin position="173"/>
        <end position="193"/>
    </location>
</feature>
<feature type="transmembrane region" description="Helical" evidence="1">
    <location>
        <begin position="198"/>
        <end position="218"/>
    </location>
</feature>
<keyword id="KW-1003">Cell membrane</keyword>
<keyword id="KW-0169">Cobalamin biosynthesis</keyword>
<keyword id="KW-0460">Magnesium</keyword>
<keyword id="KW-0472">Membrane</keyword>
<keyword id="KW-0808">Transferase</keyword>
<keyword id="KW-0812">Transmembrane</keyword>
<keyword id="KW-1133">Transmembrane helix</keyword>
<protein>
    <recommendedName>
        <fullName evidence="1">Adenosylcobinamide-GDP ribazoletransferase</fullName>
        <ecNumber evidence="1">2.7.8.26</ecNumber>
    </recommendedName>
    <alternativeName>
        <fullName evidence="1">Cobalamin synthase</fullName>
    </alternativeName>
    <alternativeName>
        <fullName evidence="1">Cobalamin-5'-phosphate synthase</fullName>
    </alternativeName>
</protein>
<reference key="1">
    <citation type="journal article" date="2007" name="Proc. Natl. Acad. Sci. U.S.A.">
        <title>Genome plasticity of BCG and impact on vaccine efficacy.</title>
        <authorList>
            <person name="Brosch R."/>
            <person name="Gordon S.V."/>
            <person name="Garnier T."/>
            <person name="Eiglmeier K."/>
            <person name="Frigui W."/>
            <person name="Valenti P."/>
            <person name="Dos Santos S."/>
            <person name="Duthoy S."/>
            <person name="Lacroix C."/>
            <person name="Garcia-Pelayo C."/>
            <person name="Inwald J.K."/>
            <person name="Golby P."/>
            <person name="Garcia J.N."/>
            <person name="Hewinson R.G."/>
            <person name="Behr M.A."/>
            <person name="Quail M.A."/>
            <person name="Churcher C."/>
            <person name="Barrell B.G."/>
            <person name="Parkhill J."/>
            <person name="Cole S.T."/>
        </authorList>
    </citation>
    <scope>NUCLEOTIDE SEQUENCE [LARGE SCALE GENOMIC DNA]</scope>
    <source>
        <strain>BCG / Pasteur 1173P2</strain>
    </source>
</reference>
<proteinExistence type="inferred from homology"/>
<name>COBS_MYCBP</name>
<accession>A1KKQ0</accession>
<sequence>MMRSLATAFAFATVIPTPGSATTPMGRGPMTALPVVGAALGALAAAIAWAGAQVFGPSSPLSGMLTVAVLLVVTRGLHIDGVADTADGLGCYGPPQRALAVMRDGSTGPFGVAAVVLVIALQGLAFATLTTVGIAGITLAVLSGRVTAVLVCRRSVPAAHGSTLGSRVAGTQPAPVVAAWLAVLLAVSVPAGPRPWQGPIAVLVAVTAGAALAAHCVHRFGGVTGDVLGSAIELSTTVSAVTLAGLARL</sequence>
<evidence type="ECO:0000255" key="1">
    <source>
        <dbReference type="HAMAP-Rule" id="MF_00719"/>
    </source>
</evidence>